<accession>Q54PS7</accession>
<reference key="1">
    <citation type="journal article" date="2005" name="Nature">
        <title>The genome of the social amoeba Dictyostelium discoideum.</title>
        <authorList>
            <person name="Eichinger L."/>
            <person name="Pachebat J.A."/>
            <person name="Gloeckner G."/>
            <person name="Rajandream M.A."/>
            <person name="Sucgang R."/>
            <person name="Berriman M."/>
            <person name="Song J."/>
            <person name="Olsen R."/>
            <person name="Szafranski K."/>
            <person name="Xu Q."/>
            <person name="Tunggal B."/>
            <person name="Kummerfeld S."/>
            <person name="Madera M."/>
            <person name="Konfortov B.A."/>
            <person name="Rivero F."/>
            <person name="Bankier A.T."/>
            <person name="Lehmann R."/>
            <person name="Hamlin N."/>
            <person name="Davies R."/>
            <person name="Gaudet P."/>
            <person name="Fey P."/>
            <person name="Pilcher K."/>
            <person name="Chen G."/>
            <person name="Saunders D."/>
            <person name="Sodergren E.J."/>
            <person name="Davis P."/>
            <person name="Kerhornou A."/>
            <person name="Nie X."/>
            <person name="Hall N."/>
            <person name="Anjard C."/>
            <person name="Hemphill L."/>
            <person name="Bason N."/>
            <person name="Farbrother P."/>
            <person name="Desany B."/>
            <person name="Just E."/>
            <person name="Morio T."/>
            <person name="Rost R."/>
            <person name="Churcher C.M."/>
            <person name="Cooper J."/>
            <person name="Haydock S."/>
            <person name="van Driessche N."/>
            <person name="Cronin A."/>
            <person name="Goodhead I."/>
            <person name="Muzny D.M."/>
            <person name="Mourier T."/>
            <person name="Pain A."/>
            <person name="Lu M."/>
            <person name="Harper D."/>
            <person name="Lindsay R."/>
            <person name="Hauser H."/>
            <person name="James K.D."/>
            <person name="Quiles M."/>
            <person name="Madan Babu M."/>
            <person name="Saito T."/>
            <person name="Buchrieser C."/>
            <person name="Wardroper A."/>
            <person name="Felder M."/>
            <person name="Thangavelu M."/>
            <person name="Johnson D."/>
            <person name="Knights A."/>
            <person name="Loulseged H."/>
            <person name="Mungall K.L."/>
            <person name="Oliver K."/>
            <person name="Price C."/>
            <person name="Quail M.A."/>
            <person name="Urushihara H."/>
            <person name="Hernandez J."/>
            <person name="Rabbinowitsch E."/>
            <person name="Steffen D."/>
            <person name="Sanders M."/>
            <person name="Ma J."/>
            <person name="Kohara Y."/>
            <person name="Sharp S."/>
            <person name="Simmonds M.N."/>
            <person name="Spiegler S."/>
            <person name="Tivey A."/>
            <person name="Sugano S."/>
            <person name="White B."/>
            <person name="Walker D."/>
            <person name="Woodward J.R."/>
            <person name="Winckler T."/>
            <person name="Tanaka Y."/>
            <person name="Shaulsky G."/>
            <person name="Schleicher M."/>
            <person name="Weinstock G.M."/>
            <person name="Rosenthal A."/>
            <person name="Cox E.C."/>
            <person name="Chisholm R.L."/>
            <person name="Gibbs R.A."/>
            <person name="Loomis W.F."/>
            <person name="Platzer M."/>
            <person name="Kay R.R."/>
            <person name="Williams J.G."/>
            <person name="Dear P.H."/>
            <person name="Noegel A.A."/>
            <person name="Barrell B.G."/>
            <person name="Kuspa A."/>
        </authorList>
    </citation>
    <scope>NUCLEOTIDE SEQUENCE [LARGE SCALE GENOMIC DNA]</scope>
    <source>
        <strain>AX4</strain>
    </source>
</reference>
<protein>
    <recommendedName>
        <fullName>Phospholipase B-like protein D</fullName>
        <ecNumber>3.1.1.-</ecNumber>
    </recommendedName>
</protein>
<name>PLBLD_DICDI</name>
<dbReference type="EC" id="3.1.1.-"/>
<dbReference type="EMBL" id="AAFI02000064">
    <property type="protein sequence ID" value="EAL65273.1"/>
    <property type="molecule type" value="Genomic_DNA"/>
</dbReference>
<dbReference type="RefSeq" id="XP_638577.1">
    <property type="nucleotide sequence ID" value="XM_633485.1"/>
</dbReference>
<dbReference type="SMR" id="Q54PS7"/>
<dbReference type="FunCoup" id="Q54PS7">
    <property type="interactions" value="2"/>
</dbReference>
<dbReference type="STRING" id="44689.Q54PS7"/>
<dbReference type="GlyCosmos" id="Q54PS7">
    <property type="glycosylation" value="5 sites, No reported glycans"/>
</dbReference>
<dbReference type="GlyGen" id="Q54PS7">
    <property type="glycosylation" value="5 sites"/>
</dbReference>
<dbReference type="PaxDb" id="44689-DDB0231379"/>
<dbReference type="EnsemblProtists" id="EAL65273">
    <property type="protein sequence ID" value="EAL65273"/>
    <property type="gene ID" value="DDB_G0284449"/>
</dbReference>
<dbReference type="GeneID" id="8624549"/>
<dbReference type="KEGG" id="ddi:DDB_G0284449"/>
<dbReference type="dictyBase" id="DDB_G0284449">
    <property type="gene designation" value="plbD"/>
</dbReference>
<dbReference type="VEuPathDB" id="AmoebaDB:DDB_G0284449"/>
<dbReference type="eggNOG" id="KOG3774">
    <property type="taxonomic scope" value="Eukaryota"/>
</dbReference>
<dbReference type="HOGENOM" id="CLU_027106_4_0_1"/>
<dbReference type="InParanoid" id="Q54PS7"/>
<dbReference type="OMA" id="MYDHFTN"/>
<dbReference type="PhylomeDB" id="Q54PS7"/>
<dbReference type="Reactome" id="R-DDI-1482788">
    <property type="pathway name" value="Acyl chain remodelling of PC"/>
</dbReference>
<dbReference type="Reactome" id="R-DDI-1482839">
    <property type="pathway name" value="Acyl chain remodelling of PE"/>
</dbReference>
<dbReference type="Reactome" id="R-DDI-1482922">
    <property type="pathway name" value="Acyl chain remodelling of PI"/>
</dbReference>
<dbReference type="Reactome" id="R-DDI-1483115">
    <property type="pathway name" value="Hydrolysis of LPC"/>
</dbReference>
<dbReference type="PRO" id="PR:Q54PS7"/>
<dbReference type="Proteomes" id="UP000002195">
    <property type="component" value="Chromosome 4"/>
</dbReference>
<dbReference type="GO" id="GO:0005576">
    <property type="term" value="C:extracellular region"/>
    <property type="evidence" value="ECO:0000318"/>
    <property type="project" value="GO_Central"/>
</dbReference>
<dbReference type="GO" id="GO:0004620">
    <property type="term" value="F:phospholipase activity"/>
    <property type="evidence" value="ECO:0000250"/>
    <property type="project" value="dictyBase"/>
</dbReference>
<dbReference type="GO" id="GO:0046338">
    <property type="term" value="P:phosphatidylethanolamine catabolic process"/>
    <property type="evidence" value="ECO:0000250"/>
    <property type="project" value="dictyBase"/>
</dbReference>
<dbReference type="GO" id="GO:0031161">
    <property type="term" value="P:phosphatidylinositol catabolic process"/>
    <property type="evidence" value="ECO:0000250"/>
    <property type="project" value="dictyBase"/>
</dbReference>
<dbReference type="GO" id="GO:0009395">
    <property type="term" value="P:phospholipid catabolic process"/>
    <property type="evidence" value="ECO:0000250"/>
    <property type="project" value="dictyBase"/>
</dbReference>
<dbReference type="FunFam" id="3.60.60.30:FF:000001">
    <property type="entry name" value="Phospholipase B-like protein G"/>
    <property type="match status" value="1"/>
</dbReference>
<dbReference type="Gene3D" id="3.60.60.30">
    <property type="match status" value="1"/>
</dbReference>
<dbReference type="InterPro" id="IPR007000">
    <property type="entry name" value="PLipase_B-like"/>
</dbReference>
<dbReference type="PANTHER" id="PTHR12370:SF3">
    <property type="entry name" value="PHOSPHOLIPASE B-LIKE 2-RELATED"/>
    <property type="match status" value="1"/>
</dbReference>
<dbReference type="PANTHER" id="PTHR12370">
    <property type="entry name" value="PHOSPHOLIPASE B-RELATED"/>
    <property type="match status" value="1"/>
</dbReference>
<dbReference type="Pfam" id="PF04916">
    <property type="entry name" value="Phospholip_B"/>
    <property type="match status" value="1"/>
</dbReference>
<proteinExistence type="inferred from homology"/>
<gene>
    <name type="primary">plbD</name>
    <name type="ORF">DDB_G0284449</name>
</gene>
<comment type="function">
    <text evidence="1">Probable phospholipase.</text>
</comment>
<comment type="subcellular location">
    <subcellularLocation>
        <location evidence="3">Secreted</location>
    </subcellularLocation>
</comment>
<comment type="similarity">
    <text evidence="3">Belongs to the phospholipase B-like family.</text>
</comment>
<feature type="signal peptide" evidence="2">
    <location>
        <begin position="1"/>
        <end position="22"/>
    </location>
</feature>
<feature type="chain" id="PRO_0000286120" description="Phospholipase B-like protein D">
    <location>
        <begin position="23"/>
        <end position="569"/>
    </location>
</feature>
<feature type="glycosylation site" description="N-linked (GlcNAc...) asparagine" evidence="2">
    <location>
        <position position="93"/>
    </location>
</feature>
<feature type="glycosylation site" description="N-linked (GlcNAc...) asparagine" evidence="2">
    <location>
        <position position="126"/>
    </location>
</feature>
<feature type="glycosylation site" description="N-linked (GlcNAc...) asparagine" evidence="2">
    <location>
        <position position="181"/>
    </location>
</feature>
<feature type="glycosylation site" description="N-linked (GlcNAc...) asparagine" evidence="2">
    <location>
        <position position="425"/>
    </location>
</feature>
<feature type="glycosylation site" description="N-linked (GlcNAc...) asparagine" evidence="2">
    <location>
        <position position="430"/>
    </location>
</feature>
<evidence type="ECO:0000250" key="1"/>
<evidence type="ECO:0000255" key="2"/>
<evidence type="ECO:0000305" key="3"/>
<organism>
    <name type="scientific">Dictyostelium discoideum</name>
    <name type="common">Social amoeba</name>
    <dbReference type="NCBI Taxonomy" id="44689"/>
    <lineage>
        <taxon>Eukaryota</taxon>
        <taxon>Amoebozoa</taxon>
        <taxon>Evosea</taxon>
        <taxon>Eumycetozoa</taxon>
        <taxon>Dictyostelia</taxon>
        <taxon>Dictyosteliales</taxon>
        <taxon>Dictyosteliaceae</taxon>
        <taxon>Dictyostelium</taxon>
    </lineage>
</organism>
<keyword id="KW-0325">Glycoprotein</keyword>
<keyword id="KW-0378">Hydrolase</keyword>
<keyword id="KW-0442">Lipid degradation</keyword>
<keyword id="KW-0443">Lipid metabolism</keyword>
<keyword id="KW-1185">Reference proteome</keyword>
<keyword id="KW-0964">Secreted</keyword>
<keyword id="KW-0732">Signal</keyword>
<sequence>MIIFKNLLKLLIILLTIKLYFCIEIKREEHLTILNELNENSDVIQYSILPGNNEEYEIVKGIQEDAIVYGYYMSNVEVNGWAYLSLVSNDKYNDSTQSRAFGYLEGYLTKDLIWNSKVNYYKNAFNSSEIPNKLDDWLTENIESIHTFIVNNRKSRYWNQITLVMDQINGMLDGYNEANTNSSETLSLHDFFVLNMFGDLFDLMPALNLDKEYKYFQKDLNDIQDWFKRSQHCSALIKVSSDYSELYSGHTTWSGYYTMLRIFKSYNQQFSSDVSGTLSKRNIFSSYPGALISVDDFYLLGDTRMVVIETTNSLVTNDLYHLIRPTTVLSWMRVIVSNRMSTNGKEWCENFQRYNSGTYNNQWMIVSYNLFVPYNELKDGALYVLEQIPGYIEFSDQTQALRQGWWNSYNIPFYETIYDASGYNNYTANNYSDSTIYYMSYQTCPRAEIFRNFAGYVESLEDFQSLLRYNDFEYDPLSHKLPFYAIASRYDLSKKNPSPFGATDTKVTCNSMIDQNTIVAISGPTTSNGQPIFEWNSKIDFMESTSHLGCPEKYNFPWVSFSDTTFRNL</sequence>